<keyword id="KW-0687">Ribonucleoprotein</keyword>
<keyword id="KW-0689">Ribosomal protein</keyword>
<keyword id="KW-0694">RNA-binding</keyword>
<keyword id="KW-0699">rRNA-binding</keyword>
<accession>A1U2C0</accession>
<dbReference type="EMBL" id="CP000514">
    <property type="protein sequence ID" value="ABM19139.1"/>
    <property type="molecule type" value="Genomic_DNA"/>
</dbReference>
<dbReference type="RefSeq" id="WP_011785532.1">
    <property type="nucleotide sequence ID" value="NC_008740.1"/>
</dbReference>
<dbReference type="SMR" id="A1U2C0"/>
<dbReference type="STRING" id="351348.Maqu_2058"/>
<dbReference type="GeneID" id="31820711"/>
<dbReference type="KEGG" id="maq:Maqu_2058"/>
<dbReference type="eggNOG" id="COG0292">
    <property type="taxonomic scope" value="Bacteria"/>
</dbReference>
<dbReference type="HOGENOM" id="CLU_123265_0_1_6"/>
<dbReference type="OrthoDB" id="9808966at2"/>
<dbReference type="Proteomes" id="UP000000998">
    <property type="component" value="Chromosome"/>
</dbReference>
<dbReference type="GO" id="GO:1990904">
    <property type="term" value="C:ribonucleoprotein complex"/>
    <property type="evidence" value="ECO:0007669"/>
    <property type="project" value="UniProtKB-KW"/>
</dbReference>
<dbReference type="GO" id="GO:0005840">
    <property type="term" value="C:ribosome"/>
    <property type="evidence" value="ECO:0007669"/>
    <property type="project" value="UniProtKB-KW"/>
</dbReference>
<dbReference type="GO" id="GO:0019843">
    <property type="term" value="F:rRNA binding"/>
    <property type="evidence" value="ECO:0007669"/>
    <property type="project" value="UniProtKB-UniRule"/>
</dbReference>
<dbReference type="GO" id="GO:0003735">
    <property type="term" value="F:structural constituent of ribosome"/>
    <property type="evidence" value="ECO:0007669"/>
    <property type="project" value="InterPro"/>
</dbReference>
<dbReference type="GO" id="GO:0000027">
    <property type="term" value="P:ribosomal large subunit assembly"/>
    <property type="evidence" value="ECO:0007669"/>
    <property type="project" value="UniProtKB-UniRule"/>
</dbReference>
<dbReference type="GO" id="GO:0006412">
    <property type="term" value="P:translation"/>
    <property type="evidence" value="ECO:0007669"/>
    <property type="project" value="InterPro"/>
</dbReference>
<dbReference type="CDD" id="cd07026">
    <property type="entry name" value="Ribosomal_L20"/>
    <property type="match status" value="1"/>
</dbReference>
<dbReference type="FunFam" id="1.10.1900.20:FF:000001">
    <property type="entry name" value="50S ribosomal protein L20"/>
    <property type="match status" value="1"/>
</dbReference>
<dbReference type="Gene3D" id="6.10.160.10">
    <property type="match status" value="1"/>
</dbReference>
<dbReference type="Gene3D" id="1.10.1900.20">
    <property type="entry name" value="Ribosomal protein L20"/>
    <property type="match status" value="1"/>
</dbReference>
<dbReference type="HAMAP" id="MF_00382">
    <property type="entry name" value="Ribosomal_bL20"/>
    <property type="match status" value="1"/>
</dbReference>
<dbReference type="InterPro" id="IPR005813">
    <property type="entry name" value="Ribosomal_bL20"/>
</dbReference>
<dbReference type="InterPro" id="IPR049946">
    <property type="entry name" value="RIBOSOMAL_L20_CS"/>
</dbReference>
<dbReference type="InterPro" id="IPR035566">
    <property type="entry name" value="Ribosomal_protein_bL20_C"/>
</dbReference>
<dbReference type="NCBIfam" id="TIGR01032">
    <property type="entry name" value="rplT_bact"/>
    <property type="match status" value="1"/>
</dbReference>
<dbReference type="PANTHER" id="PTHR10986">
    <property type="entry name" value="39S RIBOSOMAL PROTEIN L20"/>
    <property type="match status" value="1"/>
</dbReference>
<dbReference type="Pfam" id="PF00453">
    <property type="entry name" value="Ribosomal_L20"/>
    <property type="match status" value="1"/>
</dbReference>
<dbReference type="PRINTS" id="PR00062">
    <property type="entry name" value="RIBOSOMALL20"/>
</dbReference>
<dbReference type="SUPFAM" id="SSF74731">
    <property type="entry name" value="Ribosomal protein L20"/>
    <property type="match status" value="1"/>
</dbReference>
<dbReference type="PROSITE" id="PS00937">
    <property type="entry name" value="RIBOSOMAL_L20"/>
    <property type="match status" value="1"/>
</dbReference>
<comment type="function">
    <text evidence="1">Binds directly to 23S ribosomal RNA and is necessary for the in vitro assembly process of the 50S ribosomal subunit. It is not involved in the protein synthesizing functions of that subunit.</text>
</comment>
<comment type="similarity">
    <text evidence="1">Belongs to the bacterial ribosomal protein bL20 family.</text>
</comment>
<feature type="chain" id="PRO_1000049006" description="Large ribosomal subunit protein bL20">
    <location>
        <begin position="1"/>
        <end position="117"/>
    </location>
</feature>
<sequence length="117" mass="13243">MARVKRGVVARRRHKKILNQAKGYYGARSRVYRVAKQAVIKAGQYAYRDRRNRKRAFRALWIARINAGARANGLSYSRLIAGLKKANVEIDRKVLADLAMNEQQAFAAVVEKAKASL</sequence>
<name>RL20_MARN8</name>
<proteinExistence type="inferred from homology"/>
<organism>
    <name type="scientific">Marinobacter nauticus (strain ATCC 700491 / DSM 11845 / VT8)</name>
    <name type="common">Marinobacter aquaeolei</name>
    <dbReference type="NCBI Taxonomy" id="351348"/>
    <lineage>
        <taxon>Bacteria</taxon>
        <taxon>Pseudomonadati</taxon>
        <taxon>Pseudomonadota</taxon>
        <taxon>Gammaproteobacteria</taxon>
        <taxon>Pseudomonadales</taxon>
        <taxon>Marinobacteraceae</taxon>
        <taxon>Marinobacter</taxon>
    </lineage>
</organism>
<protein>
    <recommendedName>
        <fullName evidence="1">Large ribosomal subunit protein bL20</fullName>
    </recommendedName>
    <alternativeName>
        <fullName evidence="2">50S ribosomal protein L20</fullName>
    </alternativeName>
</protein>
<evidence type="ECO:0000255" key="1">
    <source>
        <dbReference type="HAMAP-Rule" id="MF_00382"/>
    </source>
</evidence>
<evidence type="ECO:0000305" key="2"/>
<gene>
    <name evidence="1" type="primary">rplT</name>
    <name type="ordered locus">Maqu_2058</name>
</gene>
<reference key="1">
    <citation type="journal article" date="2011" name="Appl. Environ. Microbiol.">
        <title>Genomic potential of Marinobacter aquaeolei, a biogeochemical 'opportunitroph'.</title>
        <authorList>
            <person name="Singer E."/>
            <person name="Webb E.A."/>
            <person name="Nelson W.C."/>
            <person name="Heidelberg J.F."/>
            <person name="Ivanova N."/>
            <person name="Pati A."/>
            <person name="Edwards K.J."/>
        </authorList>
    </citation>
    <scope>NUCLEOTIDE SEQUENCE [LARGE SCALE GENOMIC DNA]</scope>
    <source>
        <strain>ATCC 700491 / DSM 11845 / VT8</strain>
    </source>
</reference>